<gene>
    <name type="primary">marchf8</name>
    <name type="synonym">march8</name>
    <name type="ORF">TNeu072c23.1</name>
</gene>
<keyword id="KW-0968">Cytoplasmic vesicle</keyword>
<keyword id="KW-0967">Endosome</keyword>
<keyword id="KW-0391">Immunity</keyword>
<keyword id="KW-0458">Lysosome</keyword>
<keyword id="KW-0472">Membrane</keyword>
<keyword id="KW-0479">Metal-binding</keyword>
<keyword id="KW-1185">Reference proteome</keyword>
<keyword id="KW-0808">Transferase</keyword>
<keyword id="KW-0812">Transmembrane</keyword>
<keyword id="KW-1133">Transmembrane helix</keyword>
<keyword id="KW-0833">Ubl conjugation pathway</keyword>
<keyword id="KW-0862">Zinc</keyword>
<keyword id="KW-0863">Zinc-finger</keyword>
<dbReference type="EC" id="2.3.2.27"/>
<dbReference type="EMBL" id="CR760341">
    <property type="protein sequence ID" value="CAJ82358.1"/>
    <property type="molecule type" value="mRNA"/>
</dbReference>
<dbReference type="EMBL" id="BC074623">
    <property type="protein sequence ID" value="AAH74623.1"/>
    <property type="status" value="ALT_INIT"/>
    <property type="molecule type" value="mRNA"/>
</dbReference>
<dbReference type="RefSeq" id="NP_001004831.1">
    <property type="nucleotide sequence ID" value="NM_001004831.1"/>
</dbReference>
<dbReference type="BMRB" id="Q28IK8"/>
<dbReference type="FunCoup" id="Q28IK8">
    <property type="interactions" value="683"/>
</dbReference>
<dbReference type="STRING" id="8364.ENSXETP00000016983"/>
<dbReference type="PaxDb" id="8364-ENSXETP00000061447"/>
<dbReference type="DNASU" id="448095"/>
<dbReference type="GeneID" id="448095"/>
<dbReference type="KEGG" id="xtr:448095"/>
<dbReference type="CTD" id="220972"/>
<dbReference type="eggNOG" id="KOG1609">
    <property type="taxonomic scope" value="Eukaryota"/>
</dbReference>
<dbReference type="HOGENOM" id="CLU_070599_0_1_1"/>
<dbReference type="InParanoid" id="Q28IK8"/>
<dbReference type="OrthoDB" id="264354at2759"/>
<dbReference type="UniPathway" id="UPA00143"/>
<dbReference type="Proteomes" id="UP000008143">
    <property type="component" value="Chromosome 7"/>
</dbReference>
<dbReference type="GO" id="GO:0031901">
    <property type="term" value="C:early endosome membrane"/>
    <property type="evidence" value="ECO:0007669"/>
    <property type="project" value="UniProtKB-SubCell"/>
</dbReference>
<dbReference type="GO" id="GO:0005768">
    <property type="term" value="C:endosome"/>
    <property type="evidence" value="ECO:0000250"/>
    <property type="project" value="UniProtKB"/>
</dbReference>
<dbReference type="GO" id="GO:0005765">
    <property type="term" value="C:lysosomal membrane"/>
    <property type="evidence" value="ECO:0007669"/>
    <property type="project" value="UniProtKB-SubCell"/>
</dbReference>
<dbReference type="GO" id="GO:0005764">
    <property type="term" value="C:lysosome"/>
    <property type="evidence" value="ECO:0000250"/>
    <property type="project" value="UniProtKB"/>
</dbReference>
<dbReference type="GO" id="GO:0004842">
    <property type="term" value="F:ubiquitin-protein transferase activity"/>
    <property type="evidence" value="ECO:0000250"/>
    <property type="project" value="UniProtKB"/>
</dbReference>
<dbReference type="GO" id="GO:0008270">
    <property type="term" value="F:zinc ion binding"/>
    <property type="evidence" value="ECO:0007669"/>
    <property type="project" value="UniProtKB-KW"/>
</dbReference>
<dbReference type="GO" id="GO:0002376">
    <property type="term" value="P:immune system process"/>
    <property type="evidence" value="ECO:0007669"/>
    <property type="project" value="UniProtKB-KW"/>
</dbReference>
<dbReference type="GO" id="GO:0016567">
    <property type="term" value="P:protein ubiquitination"/>
    <property type="evidence" value="ECO:0007669"/>
    <property type="project" value="UniProtKB-UniPathway"/>
</dbReference>
<dbReference type="CDD" id="cd16807">
    <property type="entry name" value="RING_CH-C4HC3_MARCH8"/>
    <property type="match status" value="1"/>
</dbReference>
<dbReference type="FunFam" id="3.30.40.10:FF:000043">
    <property type="entry name" value="Putative e3 ubiquitin-protein ligase march8"/>
    <property type="match status" value="1"/>
</dbReference>
<dbReference type="Gene3D" id="3.30.40.10">
    <property type="entry name" value="Zinc/RING finger domain, C3HC4 (zinc finger)"/>
    <property type="match status" value="1"/>
</dbReference>
<dbReference type="InterPro" id="IPR001841">
    <property type="entry name" value="Znf_RING"/>
</dbReference>
<dbReference type="InterPro" id="IPR011016">
    <property type="entry name" value="Znf_RING-CH"/>
</dbReference>
<dbReference type="InterPro" id="IPR013083">
    <property type="entry name" value="Znf_RING/FYVE/PHD"/>
</dbReference>
<dbReference type="PANTHER" id="PTHR45981">
    <property type="entry name" value="LD02310P"/>
    <property type="match status" value="1"/>
</dbReference>
<dbReference type="Pfam" id="PF12906">
    <property type="entry name" value="RINGv"/>
    <property type="match status" value="1"/>
</dbReference>
<dbReference type="SMART" id="SM00744">
    <property type="entry name" value="RINGv"/>
    <property type="match status" value="1"/>
</dbReference>
<dbReference type="SUPFAM" id="SSF57850">
    <property type="entry name" value="RING/U-box"/>
    <property type="match status" value="1"/>
</dbReference>
<dbReference type="PROSITE" id="PS51292">
    <property type="entry name" value="ZF_RING_CH"/>
    <property type="match status" value="1"/>
</dbReference>
<name>MARH8_XENTR</name>
<organism>
    <name type="scientific">Xenopus tropicalis</name>
    <name type="common">Western clawed frog</name>
    <name type="synonym">Silurana tropicalis</name>
    <dbReference type="NCBI Taxonomy" id="8364"/>
    <lineage>
        <taxon>Eukaryota</taxon>
        <taxon>Metazoa</taxon>
        <taxon>Chordata</taxon>
        <taxon>Craniata</taxon>
        <taxon>Vertebrata</taxon>
        <taxon>Euteleostomi</taxon>
        <taxon>Amphibia</taxon>
        <taxon>Batrachia</taxon>
        <taxon>Anura</taxon>
        <taxon>Pipoidea</taxon>
        <taxon>Pipidae</taxon>
        <taxon>Xenopodinae</taxon>
        <taxon>Xenopus</taxon>
        <taxon>Silurana</taxon>
    </lineage>
</organism>
<comment type="function">
    <text evidence="1">E3 ubiquitin-protein ligase that mediates ubiquitination of cd86 and MHC class II proteins, such as hla-dr alpha and beta, and promotes their subsequent endocytosis and sorting to lysosomes via multivesicular bodies.</text>
</comment>
<comment type="catalytic activity">
    <reaction>
        <text>S-ubiquitinyl-[E2 ubiquitin-conjugating enzyme]-L-cysteine + [acceptor protein]-L-lysine = [E2 ubiquitin-conjugating enzyme]-L-cysteine + N(6)-ubiquitinyl-[acceptor protein]-L-lysine.</text>
        <dbReference type="EC" id="2.3.2.27"/>
    </reaction>
</comment>
<comment type="pathway">
    <text>Protein modification; protein ubiquitination.</text>
</comment>
<comment type="subcellular location">
    <subcellularLocation>
        <location evidence="1">Cytoplasmic vesicle membrane</location>
        <topology evidence="2">Multi-pass membrane protein</topology>
    </subcellularLocation>
    <subcellularLocation>
        <location evidence="1">Lysosome membrane</location>
        <topology evidence="2">Multi-pass membrane protein</topology>
    </subcellularLocation>
    <subcellularLocation>
        <location evidence="1">Early endosome membrane</location>
        <topology evidence="2">Multi-pass membrane protein</topology>
    </subcellularLocation>
</comment>
<comment type="domain">
    <text evidence="3">The RING-CH-type zinc finger domain is required for E3 ligase activity.</text>
</comment>
<comment type="sequence caution" evidence="5">
    <conflict type="erroneous initiation">
        <sequence resource="EMBL-CDS" id="AAH74623"/>
    </conflict>
    <text>Truncated N-terminus.</text>
</comment>
<reference key="1">
    <citation type="submission" date="2006-10" db="EMBL/GenBank/DDBJ databases">
        <authorList>
            <consortium name="Sanger Xenopus tropicalis EST/cDNA project"/>
        </authorList>
    </citation>
    <scope>NUCLEOTIDE SEQUENCE [LARGE SCALE MRNA]</scope>
    <source>
        <tissue>Neurula</tissue>
    </source>
</reference>
<reference key="2">
    <citation type="submission" date="2004-06" db="EMBL/GenBank/DDBJ databases">
        <authorList>
            <consortium name="NIH - Xenopus Gene Collection (XGC) project"/>
        </authorList>
    </citation>
    <scope>NUCLEOTIDE SEQUENCE [LARGE SCALE MRNA]</scope>
    <source>
        <tissue>Embryo</tissue>
    </source>
</reference>
<accession>Q28IK8</accession>
<accession>Q6GL81</accession>
<sequence>MHSCWKMKLQNEKTLGHSVSRSSNISKAGSPTSVSAPSSFPRTSVTPSSQDICRICHCEGDDESPLITPCHCTGSLHFVHQACLQQWIKSSDTRCCELCKFEFIMETKLKPLRKWEKLQMTASERRKIMCSVTFHVIAITCVVWSLYVLIDRTAEEIKMGQNNGILEWPFWTKLVVVAIGFTGGLLFMYVQCKVYVQLWKRLKAYNRVIYVQNCPETCKKKIFEKSVIIEPNLESKEALGIHHSDTNSSYYTEPEDCGAAILQV</sequence>
<protein>
    <recommendedName>
        <fullName>E3 ubiquitin-protein ligase MARCHF8</fullName>
        <ecNumber>2.3.2.27</ecNumber>
    </recommendedName>
    <alternativeName>
        <fullName>Membrane-associated RING finger protein 8</fullName>
    </alternativeName>
    <alternativeName>
        <fullName>Membrane-associated RING-CH protein VIII</fullName>
        <shortName>MARCH-VIII</shortName>
    </alternativeName>
    <alternativeName>
        <fullName evidence="5">RING-type E3 ubiquitin transferase MARCHF8</fullName>
    </alternativeName>
</protein>
<proteinExistence type="evidence at transcript level"/>
<evidence type="ECO:0000250" key="1">
    <source>
        <dbReference type="UniProtKB" id="Q5T0T0"/>
    </source>
</evidence>
<evidence type="ECO:0000255" key="2"/>
<evidence type="ECO:0000255" key="3">
    <source>
        <dbReference type="PROSITE-ProRule" id="PRU00623"/>
    </source>
</evidence>
<evidence type="ECO:0000256" key="4">
    <source>
        <dbReference type="SAM" id="MobiDB-lite"/>
    </source>
</evidence>
<evidence type="ECO:0000305" key="5"/>
<feature type="chain" id="PRO_0000274373" description="E3 ubiquitin-protein ligase MARCHF8">
    <location>
        <begin position="1"/>
        <end position="264"/>
    </location>
</feature>
<feature type="transmembrane region" description="Helical" evidence="2">
    <location>
        <begin position="130"/>
        <end position="150"/>
    </location>
</feature>
<feature type="transmembrane region" description="Helical" evidence="2">
    <location>
        <begin position="170"/>
        <end position="190"/>
    </location>
</feature>
<feature type="zinc finger region" description="RING-CH-type" evidence="3">
    <location>
        <begin position="45"/>
        <end position="106"/>
    </location>
</feature>
<feature type="region of interest" description="Disordered" evidence="4">
    <location>
        <begin position="15"/>
        <end position="47"/>
    </location>
</feature>
<feature type="compositionally biased region" description="Polar residues" evidence="4">
    <location>
        <begin position="17"/>
        <end position="47"/>
    </location>
</feature>
<feature type="binding site" evidence="3">
    <location>
        <position position="53"/>
    </location>
    <ligand>
        <name>Zn(2+)</name>
        <dbReference type="ChEBI" id="CHEBI:29105"/>
        <label>1</label>
    </ligand>
</feature>
<feature type="binding site" evidence="3">
    <location>
        <position position="56"/>
    </location>
    <ligand>
        <name>Zn(2+)</name>
        <dbReference type="ChEBI" id="CHEBI:29105"/>
        <label>1</label>
    </ligand>
</feature>
<feature type="binding site" evidence="3">
    <location>
        <position position="70"/>
    </location>
    <ligand>
        <name>Zn(2+)</name>
        <dbReference type="ChEBI" id="CHEBI:29105"/>
        <label>2</label>
    </ligand>
</feature>
<feature type="binding site" evidence="3">
    <location>
        <position position="72"/>
    </location>
    <ligand>
        <name>Zn(2+)</name>
        <dbReference type="ChEBI" id="CHEBI:29105"/>
        <label>2</label>
    </ligand>
</feature>
<feature type="binding site" evidence="3">
    <location>
        <position position="80"/>
    </location>
    <ligand>
        <name>Zn(2+)</name>
        <dbReference type="ChEBI" id="CHEBI:29105"/>
        <label>1</label>
    </ligand>
</feature>
<feature type="binding site" evidence="3">
    <location>
        <position position="83"/>
    </location>
    <ligand>
        <name>Zn(2+)</name>
        <dbReference type="ChEBI" id="CHEBI:29105"/>
        <label>1</label>
    </ligand>
</feature>
<feature type="binding site" evidence="3">
    <location>
        <position position="96"/>
    </location>
    <ligand>
        <name>Zn(2+)</name>
        <dbReference type="ChEBI" id="CHEBI:29105"/>
        <label>2</label>
    </ligand>
</feature>
<feature type="binding site" evidence="3">
    <location>
        <position position="99"/>
    </location>
    <ligand>
        <name>Zn(2+)</name>
        <dbReference type="ChEBI" id="CHEBI:29105"/>
        <label>2</label>
    </ligand>
</feature>